<comment type="function">
    <text evidence="1">Allows the formation of correctly charged Gln-tRNA(Gln) through the transamidation of misacylated Glu-tRNA(Gln) in organisms which lack glutaminyl-tRNA synthetase. The reaction takes place in the presence of glutamine and ATP through an activated gamma-phospho-Glu-tRNA(Gln) (By similarity).</text>
</comment>
<comment type="catalytic activity">
    <reaction>
        <text>L-glutamyl-tRNA(Gln) + L-glutamine + ATP + H2O = L-glutaminyl-tRNA(Gln) + L-glutamate + ADP + phosphate + H(+)</text>
        <dbReference type="Rhea" id="RHEA:17521"/>
        <dbReference type="Rhea" id="RHEA-COMP:9681"/>
        <dbReference type="Rhea" id="RHEA-COMP:9684"/>
        <dbReference type="ChEBI" id="CHEBI:15377"/>
        <dbReference type="ChEBI" id="CHEBI:15378"/>
        <dbReference type="ChEBI" id="CHEBI:29985"/>
        <dbReference type="ChEBI" id="CHEBI:30616"/>
        <dbReference type="ChEBI" id="CHEBI:43474"/>
        <dbReference type="ChEBI" id="CHEBI:58359"/>
        <dbReference type="ChEBI" id="CHEBI:78520"/>
        <dbReference type="ChEBI" id="CHEBI:78521"/>
        <dbReference type="ChEBI" id="CHEBI:456216"/>
        <dbReference type="EC" id="6.3.5.7"/>
    </reaction>
</comment>
<comment type="subunit">
    <text evidence="1">Heterotrimer of A, B and C subunits.</text>
</comment>
<comment type="similarity">
    <text evidence="2">Belongs to the amidase family. GatA subfamily.</text>
</comment>
<keyword id="KW-0067">ATP-binding</keyword>
<keyword id="KW-0436">Ligase</keyword>
<keyword id="KW-0547">Nucleotide-binding</keyword>
<keyword id="KW-0648">Protein biosynthesis</keyword>
<keyword id="KW-1185">Reference proteome</keyword>
<accession>Q9Z9W9</accession>
<accession>Q9JPV8</accession>
<feature type="chain" id="PRO_0000105136" description="Glutamyl-tRNA(Gln) amidotransferase subunit A">
    <location>
        <begin position="1"/>
        <end position="485"/>
    </location>
</feature>
<feature type="active site" description="Charge relay system" evidence="1">
    <location>
        <position position="79"/>
    </location>
</feature>
<feature type="active site" description="Charge relay system" evidence="1">
    <location>
        <position position="154"/>
    </location>
</feature>
<feature type="active site" description="Acyl-ester intermediate" evidence="1">
    <location>
        <position position="178"/>
    </location>
</feature>
<proteinExistence type="inferred from homology"/>
<protein>
    <recommendedName>
        <fullName>Glutamyl-tRNA(Gln) amidotransferase subunit A</fullName>
        <shortName>Glu-ADT subunit A</shortName>
        <ecNumber>6.3.5.7</ecNumber>
    </recommendedName>
</protein>
<name>GATA_HALH5</name>
<gene>
    <name type="primary">gatA</name>
    <name type="ordered locus">BH0666</name>
</gene>
<sequence>MSLFDLKLKDVHTKLHEKEISVSDLVDEAYKRIEQVDGQVEAFLALNEEKARAYAKELDAALDRSEARGLLFGIPIGVKDNIVTKNLRTTCSSRILGNFDPIYDATVVHKLREAQAVTIGKLNMDEFAMGSSTENSAFQKTKNPWNLEYVPGGSSGGSAAAVAAGEVPFTLGSDTGGSIRQPAAYCGVVGLKPTYGRVSRYGLVAFASSLDQIGPITRNVEDNAYLLQAISGHDPMDSTSANLDVPDYLSALTGDIKGLKIAVPKEYLGEGVKEEVKQSVLDALKVLEGLGATWEEVSLPHSKYALATYYLLASSEASANLARFDGVRYGFRSDNADNLLDMYKQTRAEGFGDEVKRRIMLGTFALSSGYYDAYYKKAQQVRTLIKQDFEKVFEQYDVIIGPTTPTPAFKIGEKTDDPLTMYANDILTIPVNLAGVPAISVPCGFDNGLPLGLQIIGKHFDEGSVYRVAHAFEQATDYHTKRPTL</sequence>
<evidence type="ECO:0000250" key="1"/>
<evidence type="ECO:0000305" key="2"/>
<dbReference type="EC" id="6.3.5.7"/>
<dbReference type="EMBL" id="AB011836">
    <property type="protein sequence ID" value="BAA75313.1"/>
    <property type="molecule type" value="Genomic_DNA"/>
</dbReference>
<dbReference type="EMBL" id="BA000004">
    <property type="protein sequence ID" value="BAB04385.1"/>
    <property type="molecule type" value="Genomic_DNA"/>
</dbReference>
<dbReference type="PIR" id="T44294">
    <property type="entry name" value="T44294"/>
</dbReference>
<dbReference type="RefSeq" id="WP_010896842.1">
    <property type="nucleotide sequence ID" value="NC_002570.2"/>
</dbReference>
<dbReference type="SMR" id="Q9Z9W9"/>
<dbReference type="STRING" id="272558.gene:10726540"/>
<dbReference type="KEGG" id="bha:BH0666"/>
<dbReference type="eggNOG" id="COG0154">
    <property type="taxonomic scope" value="Bacteria"/>
</dbReference>
<dbReference type="HOGENOM" id="CLU_009600_0_3_9"/>
<dbReference type="OrthoDB" id="9811471at2"/>
<dbReference type="Proteomes" id="UP000001258">
    <property type="component" value="Chromosome"/>
</dbReference>
<dbReference type="GO" id="GO:0030956">
    <property type="term" value="C:glutamyl-tRNA(Gln) amidotransferase complex"/>
    <property type="evidence" value="ECO:0007669"/>
    <property type="project" value="InterPro"/>
</dbReference>
<dbReference type="GO" id="GO:0005524">
    <property type="term" value="F:ATP binding"/>
    <property type="evidence" value="ECO:0007669"/>
    <property type="project" value="UniProtKB-KW"/>
</dbReference>
<dbReference type="GO" id="GO:0050567">
    <property type="term" value="F:glutaminyl-tRNA synthase (glutamine-hydrolyzing) activity"/>
    <property type="evidence" value="ECO:0007669"/>
    <property type="project" value="UniProtKB-UniRule"/>
</dbReference>
<dbReference type="GO" id="GO:0006412">
    <property type="term" value="P:translation"/>
    <property type="evidence" value="ECO:0007669"/>
    <property type="project" value="UniProtKB-UniRule"/>
</dbReference>
<dbReference type="Gene3D" id="3.90.1300.10">
    <property type="entry name" value="Amidase signature (AS) domain"/>
    <property type="match status" value="1"/>
</dbReference>
<dbReference type="HAMAP" id="MF_00120">
    <property type="entry name" value="GatA"/>
    <property type="match status" value="1"/>
</dbReference>
<dbReference type="InterPro" id="IPR000120">
    <property type="entry name" value="Amidase"/>
</dbReference>
<dbReference type="InterPro" id="IPR020556">
    <property type="entry name" value="Amidase_CS"/>
</dbReference>
<dbReference type="InterPro" id="IPR023631">
    <property type="entry name" value="Amidase_dom"/>
</dbReference>
<dbReference type="InterPro" id="IPR036928">
    <property type="entry name" value="AS_sf"/>
</dbReference>
<dbReference type="InterPro" id="IPR004412">
    <property type="entry name" value="GatA"/>
</dbReference>
<dbReference type="NCBIfam" id="TIGR00132">
    <property type="entry name" value="gatA"/>
    <property type="match status" value="1"/>
</dbReference>
<dbReference type="PANTHER" id="PTHR11895:SF151">
    <property type="entry name" value="GLUTAMYL-TRNA(GLN) AMIDOTRANSFERASE SUBUNIT A"/>
    <property type="match status" value="1"/>
</dbReference>
<dbReference type="PANTHER" id="PTHR11895">
    <property type="entry name" value="TRANSAMIDASE"/>
    <property type="match status" value="1"/>
</dbReference>
<dbReference type="Pfam" id="PF01425">
    <property type="entry name" value="Amidase"/>
    <property type="match status" value="1"/>
</dbReference>
<dbReference type="SUPFAM" id="SSF75304">
    <property type="entry name" value="Amidase signature (AS) enzymes"/>
    <property type="match status" value="1"/>
</dbReference>
<dbReference type="PROSITE" id="PS00571">
    <property type="entry name" value="AMIDASES"/>
    <property type="match status" value="1"/>
</dbReference>
<reference key="1">
    <citation type="journal article" date="1999" name="Extremophiles">
        <title>Sequencing of three lambda clones from the genome of alkaliphilic Bacillus sp. strain C-125.</title>
        <authorList>
            <person name="Takami H."/>
            <person name="Nakasone K."/>
            <person name="Ogasawara N."/>
            <person name="Hirama C."/>
            <person name="Nakamura Y."/>
            <person name="Masui N."/>
            <person name="Fuji F."/>
            <person name="Takaki Y."/>
            <person name="Inoue A."/>
            <person name="Horikoshi K."/>
        </authorList>
    </citation>
    <scope>NUCLEOTIDE SEQUENCE [GENOMIC DNA]</scope>
    <source>
        <strain>ATCC BAA-125 / DSM 18197 / FERM 7344 / JCM 9153 / C-125</strain>
    </source>
</reference>
<reference key="2">
    <citation type="journal article" date="2000" name="Nucleic Acids Res.">
        <title>Complete genome sequence of the alkaliphilic bacterium Bacillus halodurans and genomic sequence comparison with Bacillus subtilis.</title>
        <authorList>
            <person name="Takami H."/>
            <person name="Nakasone K."/>
            <person name="Takaki Y."/>
            <person name="Maeno G."/>
            <person name="Sasaki R."/>
            <person name="Masui N."/>
            <person name="Fuji F."/>
            <person name="Hirama C."/>
            <person name="Nakamura Y."/>
            <person name="Ogasawara N."/>
            <person name="Kuhara S."/>
            <person name="Horikoshi K."/>
        </authorList>
    </citation>
    <scope>NUCLEOTIDE SEQUENCE [LARGE SCALE GENOMIC DNA]</scope>
    <source>
        <strain>ATCC BAA-125 / DSM 18197 / FERM 7344 / JCM 9153 / C-125</strain>
    </source>
</reference>
<organism>
    <name type="scientific">Halalkalibacterium halodurans (strain ATCC BAA-125 / DSM 18197 / FERM 7344 / JCM 9153 / C-125)</name>
    <name type="common">Bacillus halodurans</name>
    <dbReference type="NCBI Taxonomy" id="272558"/>
    <lineage>
        <taxon>Bacteria</taxon>
        <taxon>Bacillati</taxon>
        <taxon>Bacillota</taxon>
        <taxon>Bacilli</taxon>
        <taxon>Bacillales</taxon>
        <taxon>Bacillaceae</taxon>
        <taxon>Halalkalibacterium (ex Joshi et al. 2022)</taxon>
    </lineage>
</organism>